<gene>
    <name type="primary">Pcp</name>
    <name type="ORF">GA17453</name>
</gene>
<accession>P16369</accession>
<accession>Q29P32</accession>
<dbReference type="EMBL" id="X06285">
    <property type="protein sequence ID" value="CAA29610.1"/>
    <property type="molecule type" value="Genomic_DNA"/>
</dbReference>
<dbReference type="EMBL" id="CH379058">
    <property type="protein sequence ID" value="EAL34462.2"/>
    <property type="status" value="ALT_SEQ"/>
    <property type="molecule type" value="Genomic_DNA"/>
</dbReference>
<dbReference type="PIR" id="S01205">
    <property type="entry name" value="UCFFPP"/>
</dbReference>
<dbReference type="RefSeq" id="XP_001357393.3">
    <property type="nucleotide sequence ID" value="XM_001357357.3"/>
</dbReference>
<dbReference type="RefSeq" id="XP_015035470.1">
    <property type="nucleotide sequence ID" value="XM_015179984.1"/>
</dbReference>
<dbReference type="FunCoup" id="P16369">
    <property type="interactions" value="33"/>
</dbReference>
<dbReference type="STRING" id="46245.P16369"/>
<dbReference type="EnsemblMetazoa" id="FBtr0366166">
    <property type="protein sequence ID" value="FBpp0329385"/>
    <property type="gene ID" value="FBgn0012707"/>
</dbReference>
<dbReference type="EnsemblMetazoa" id="FBtr0370656">
    <property type="protein sequence ID" value="FBpp0333006"/>
    <property type="gene ID" value="FBgn0012707"/>
</dbReference>
<dbReference type="eggNOG" id="ENOG502T8G8">
    <property type="taxonomic scope" value="Eukaryota"/>
</dbReference>
<dbReference type="InParanoid" id="P16369"/>
<dbReference type="Proteomes" id="UP000001819">
    <property type="component" value="Unplaced"/>
</dbReference>
<dbReference type="Bgee" id="FBgn0012707">
    <property type="expression patterns" value="Expressed in female reproductive system and 1 other cell type or tissue"/>
</dbReference>
<dbReference type="GO" id="GO:0062129">
    <property type="term" value="C:chitin-based extracellular matrix"/>
    <property type="evidence" value="ECO:0007669"/>
    <property type="project" value="TreeGrafter"/>
</dbReference>
<dbReference type="GO" id="GO:0008010">
    <property type="term" value="F:structural constituent of chitin-based larval cuticle"/>
    <property type="evidence" value="ECO:0007669"/>
    <property type="project" value="TreeGrafter"/>
</dbReference>
<dbReference type="InterPro" id="IPR031311">
    <property type="entry name" value="CHIT_BIND_RR_consensus"/>
</dbReference>
<dbReference type="InterPro" id="IPR050468">
    <property type="entry name" value="Cuticle_Struct_Prot"/>
</dbReference>
<dbReference type="InterPro" id="IPR000618">
    <property type="entry name" value="Insect_cuticle"/>
</dbReference>
<dbReference type="PANTHER" id="PTHR10380">
    <property type="entry name" value="CUTICLE PROTEIN"/>
    <property type="match status" value="1"/>
</dbReference>
<dbReference type="PANTHER" id="PTHR10380:SF237">
    <property type="entry name" value="CUTICULAR PROTEIN 65AU, ISOFORM A-RELATED"/>
    <property type="match status" value="1"/>
</dbReference>
<dbReference type="Pfam" id="PF00379">
    <property type="entry name" value="Chitin_bind_4"/>
    <property type="match status" value="1"/>
</dbReference>
<dbReference type="PRINTS" id="PR00947">
    <property type="entry name" value="CUTICLE"/>
</dbReference>
<dbReference type="PROSITE" id="PS00233">
    <property type="entry name" value="CHIT_BIND_RR_1"/>
    <property type="match status" value="1"/>
</dbReference>
<dbReference type="PROSITE" id="PS51155">
    <property type="entry name" value="CHIT_BIND_RR_2"/>
    <property type="match status" value="1"/>
</dbReference>
<organism>
    <name type="scientific">Drosophila pseudoobscura pseudoobscura</name>
    <name type="common">Fruit fly</name>
    <dbReference type="NCBI Taxonomy" id="46245"/>
    <lineage>
        <taxon>Eukaryota</taxon>
        <taxon>Metazoa</taxon>
        <taxon>Ecdysozoa</taxon>
        <taxon>Arthropoda</taxon>
        <taxon>Hexapoda</taxon>
        <taxon>Insecta</taxon>
        <taxon>Pterygota</taxon>
        <taxon>Neoptera</taxon>
        <taxon>Endopterygota</taxon>
        <taxon>Diptera</taxon>
        <taxon>Brachycera</taxon>
        <taxon>Muscomorpha</taxon>
        <taxon>Ephydroidea</taxon>
        <taxon>Drosophilidae</taxon>
        <taxon>Drosophila</taxon>
        <taxon>Sophophora</taxon>
    </lineage>
</organism>
<proteinExistence type="evidence at transcript level"/>
<evidence type="ECO:0000255" key="1"/>
<evidence type="ECO:0000255" key="2">
    <source>
        <dbReference type="PROSITE-ProRule" id="PRU00497"/>
    </source>
</evidence>
<evidence type="ECO:0000256" key="3">
    <source>
        <dbReference type="SAM" id="MobiDB-lite"/>
    </source>
</evidence>
<evidence type="ECO:0000305" key="4"/>
<keyword id="KW-0193">Cuticle</keyword>
<keyword id="KW-1185">Reference proteome</keyword>
<keyword id="KW-0732">Signal</keyword>
<comment type="function">
    <text>Component of the cuticle of the pupa of fruit fly.</text>
</comment>
<comment type="developmental stage">
    <text>Expressed throughout both the fourth and the fifth larval instars.</text>
</comment>
<comment type="sequence caution" evidence="4">
    <conflict type="erroneous gene model prediction">
        <sequence resource="EMBL-CDS" id="EAL34462"/>
    </conflict>
</comment>
<protein>
    <recommendedName>
        <fullName>Pupal cuticle protein</fullName>
    </recommendedName>
</protein>
<sequence>MHLLMSLFGVLAVMQQQLAVRAAAYIPDSDRNTKTLQNDLQVERDGNYRYAYETSNGISATQEGLGGVSVQGGSSYTSPEGSVISVSYVADETGYHPVGDHIPKVPDYILRALEYIRAHPYQVKDYYTGELKTVAHDAAAFNVYTRNIQDQTTPRSRPSSTPKTIYLTHPPTLSDAPTRRPLRQRQNDSRRR</sequence>
<reference key="1">
    <citation type="journal article" date="1987" name="Genetics">
        <title>Conserved arrangement of nested genes at the Drosophila Gart locus.</title>
        <authorList>
            <person name="Henikoff S."/>
            <person name="Eghtedarzadeh M.K."/>
        </authorList>
    </citation>
    <scope>NUCLEOTIDE SEQUENCE [GENOMIC DNA]</scope>
    <source>
        <strain>EST10</strain>
    </source>
</reference>
<reference key="2">
    <citation type="journal article" date="2005" name="Genome Res.">
        <title>Comparative genome sequencing of Drosophila pseudoobscura: chromosomal, gene, and cis-element evolution.</title>
        <authorList>
            <person name="Richards S."/>
            <person name="Liu Y."/>
            <person name="Bettencourt B.R."/>
            <person name="Hradecky P."/>
            <person name="Letovsky S."/>
            <person name="Nielsen R."/>
            <person name="Thornton K."/>
            <person name="Hubisz M.J."/>
            <person name="Chen R."/>
            <person name="Meisel R.P."/>
            <person name="Couronne O."/>
            <person name="Hua S."/>
            <person name="Smith M.A."/>
            <person name="Zhang P."/>
            <person name="Liu J."/>
            <person name="Bussemaker H.J."/>
            <person name="van Batenburg M.F."/>
            <person name="Howells S.L."/>
            <person name="Scherer S.E."/>
            <person name="Sodergren E."/>
            <person name="Matthews B.B."/>
            <person name="Crosby M.A."/>
            <person name="Schroeder A.J."/>
            <person name="Ortiz-Barrientos D."/>
            <person name="Rives C.M."/>
            <person name="Metzker M.L."/>
            <person name="Muzny D.M."/>
            <person name="Scott G."/>
            <person name="Steffen D."/>
            <person name="Wheeler D.A."/>
            <person name="Worley K.C."/>
            <person name="Havlak P."/>
            <person name="Durbin K.J."/>
            <person name="Egan A."/>
            <person name="Gill R."/>
            <person name="Hume J."/>
            <person name="Morgan M.B."/>
            <person name="Miner G."/>
            <person name="Hamilton C."/>
            <person name="Huang Y."/>
            <person name="Waldron L."/>
            <person name="Verduzco D."/>
            <person name="Clerc-Blankenburg K.P."/>
            <person name="Dubchak I."/>
            <person name="Noor M.A.F."/>
            <person name="Anderson W."/>
            <person name="White K.P."/>
            <person name="Clark A.G."/>
            <person name="Schaeffer S.W."/>
            <person name="Gelbart W.M."/>
            <person name="Weinstock G.M."/>
            <person name="Gibbs R.A."/>
        </authorList>
    </citation>
    <scope>NUCLEOTIDE SEQUENCE [LARGE SCALE GENOMIC DNA]</scope>
    <source>
        <strain>MV2-25 / Tucson 14011-0121.94</strain>
    </source>
</reference>
<name>CUPP_DROPS</name>
<feature type="signal peptide" evidence="1">
    <location>
        <begin position="1"/>
        <end position="15"/>
    </location>
</feature>
<feature type="chain" id="PRO_0000006398" description="Pupal cuticle protein">
    <location>
        <begin position="16"/>
        <end position="192"/>
    </location>
</feature>
<feature type="domain" description="Chitin-binding type R&amp;R" evidence="2">
    <location>
        <begin position="45"/>
        <end position="106"/>
    </location>
</feature>
<feature type="region of interest" description="Disordered" evidence="3">
    <location>
        <begin position="149"/>
        <end position="192"/>
    </location>
</feature>
<feature type="compositionally biased region" description="Polar residues" evidence="3">
    <location>
        <begin position="149"/>
        <end position="163"/>
    </location>
</feature>
<feature type="sequence conflict" description="In Ref. 1; CAA29610." evidence="4" ref="1">
    <original>V</original>
    <variation>F</variation>
    <location>
        <position position="20"/>
    </location>
</feature>